<proteinExistence type="inferred from homology"/>
<gene>
    <name evidence="1" type="primary">rpl24</name>
    <name type="ordered locus">VNG_1702G</name>
</gene>
<dbReference type="EMBL" id="AE004437">
    <property type="protein sequence ID" value="AAG19947.1"/>
    <property type="molecule type" value="Genomic_DNA"/>
</dbReference>
<dbReference type="PIR" id="G84322">
    <property type="entry name" value="G84322"/>
</dbReference>
<dbReference type="SMR" id="Q9HPC3"/>
<dbReference type="FunCoup" id="Q9HPC3">
    <property type="interactions" value="154"/>
</dbReference>
<dbReference type="STRING" id="64091.VNG_1702G"/>
<dbReference type="PaxDb" id="64091-VNG_1702G"/>
<dbReference type="KEGG" id="hal:VNG_1702G"/>
<dbReference type="PATRIC" id="fig|64091.14.peg.1299"/>
<dbReference type="HOGENOM" id="CLU_093240_2_1_2"/>
<dbReference type="InParanoid" id="Q9HPC3"/>
<dbReference type="OrthoDB" id="10899at2157"/>
<dbReference type="PhylomeDB" id="Q9HPC3"/>
<dbReference type="Proteomes" id="UP000000554">
    <property type="component" value="Chromosome"/>
</dbReference>
<dbReference type="GO" id="GO:0022625">
    <property type="term" value="C:cytosolic large ribosomal subunit"/>
    <property type="evidence" value="ECO:0000318"/>
    <property type="project" value="GO_Central"/>
</dbReference>
<dbReference type="GO" id="GO:0003723">
    <property type="term" value="F:RNA binding"/>
    <property type="evidence" value="ECO:0000318"/>
    <property type="project" value="GO_Central"/>
</dbReference>
<dbReference type="GO" id="GO:0019843">
    <property type="term" value="F:rRNA binding"/>
    <property type="evidence" value="ECO:0007669"/>
    <property type="project" value="UniProtKB-UniRule"/>
</dbReference>
<dbReference type="GO" id="GO:0003735">
    <property type="term" value="F:structural constituent of ribosome"/>
    <property type="evidence" value="ECO:0000318"/>
    <property type="project" value="GO_Central"/>
</dbReference>
<dbReference type="GO" id="GO:0002181">
    <property type="term" value="P:cytoplasmic translation"/>
    <property type="evidence" value="ECO:0000318"/>
    <property type="project" value="GO_Central"/>
</dbReference>
<dbReference type="GO" id="GO:0042273">
    <property type="term" value="P:ribosomal large subunit biogenesis"/>
    <property type="evidence" value="ECO:0000318"/>
    <property type="project" value="GO_Central"/>
</dbReference>
<dbReference type="CDD" id="cd06089">
    <property type="entry name" value="KOW_RPL26"/>
    <property type="match status" value="1"/>
</dbReference>
<dbReference type="FunFam" id="2.30.30.30:FF:000109">
    <property type="entry name" value="50S ribosomal protein L24"/>
    <property type="match status" value="1"/>
</dbReference>
<dbReference type="Gene3D" id="2.30.30.30">
    <property type="match status" value="1"/>
</dbReference>
<dbReference type="HAMAP" id="MF_01326_A">
    <property type="entry name" value="Ribosomal_uL24_A"/>
    <property type="match status" value="1"/>
</dbReference>
<dbReference type="InterPro" id="IPR005824">
    <property type="entry name" value="KOW"/>
</dbReference>
<dbReference type="InterPro" id="IPR014722">
    <property type="entry name" value="Rib_uL2_dom2"/>
</dbReference>
<dbReference type="InterPro" id="IPR005825">
    <property type="entry name" value="Ribosomal_uL24_CS"/>
</dbReference>
<dbReference type="InterPro" id="IPR005756">
    <property type="entry name" value="Ribosomal_uL24_euk/arc"/>
</dbReference>
<dbReference type="InterPro" id="IPR041988">
    <property type="entry name" value="Ribosomal_uL24_KOW"/>
</dbReference>
<dbReference type="InterPro" id="IPR008991">
    <property type="entry name" value="Translation_prot_SH3-like_sf"/>
</dbReference>
<dbReference type="NCBIfam" id="TIGR01080">
    <property type="entry name" value="rplX_A_E"/>
    <property type="match status" value="1"/>
</dbReference>
<dbReference type="PANTHER" id="PTHR11143">
    <property type="entry name" value="60S RIBOSOMAL PROTEIN L26 FAMILY MEMBER"/>
    <property type="match status" value="1"/>
</dbReference>
<dbReference type="Pfam" id="PF00467">
    <property type="entry name" value="KOW"/>
    <property type="match status" value="1"/>
</dbReference>
<dbReference type="Pfam" id="PF16906">
    <property type="entry name" value="Ribosomal_L26"/>
    <property type="match status" value="1"/>
</dbReference>
<dbReference type="SMART" id="SM00739">
    <property type="entry name" value="KOW"/>
    <property type="match status" value="1"/>
</dbReference>
<dbReference type="SUPFAM" id="SSF50104">
    <property type="entry name" value="Translation proteins SH3-like domain"/>
    <property type="match status" value="1"/>
</dbReference>
<dbReference type="PROSITE" id="PS01108">
    <property type="entry name" value="RIBOSOMAL_L24"/>
    <property type="match status" value="1"/>
</dbReference>
<keyword id="KW-1185">Reference proteome</keyword>
<keyword id="KW-0687">Ribonucleoprotein</keyword>
<keyword id="KW-0689">Ribosomal protein</keyword>
<keyword id="KW-0694">RNA-binding</keyword>
<keyword id="KW-0699">rRNA-binding</keyword>
<feature type="chain" id="PRO_0000130768" description="Large ribosomal subunit protein uL24">
    <location>
        <begin position="1"/>
        <end position="118"/>
    </location>
</feature>
<feature type="region of interest" description="Disordered" evidence="2">
    <location>
        <begin position="1"/>
        <end position="24"/>
    </location>
</feature>
<evidence type="ECO:0000255" key="1">
    <source>
        <dbReference type="HAMAP-Rule" id="MF_01326"/>
    </source>
</evidence>
<evidence type="ECO:0000256" key="2">
    <source>
        <dbReference type="SAM" id="MobiDB-lite"/>
    </source>
</evidence>
<evidence type="ECO:0000305" key="3"/>
<protein>
    <recommendedName>
        <fullName evidence="1">Large ribosomal subunit protein uL24</fullName>
    </recommendedName>
    <alternativeName>
        <fullName evidence="3">50S ribosomal protein L24</fullName>
    </alternativeName>
</protein>
<organism>
    <name type="scientific">Halobacterium salinarum (strain ATCC 700922 / JCM 11081 / NRC-1)</name>
    <name type="common">Halobacterium halobium</name>
    <dbReference type="NCBI Taxonomy" id="64091"/>
    <lineage>
        <taxon>Archaea</taxon>
        <taxon>Methanobacteriati</taxon>
        <taxon>Methanobacteriota</taxon>
        <taxon>Stenosarchaea group</taxon>
        <taxon>Halobacteria</taxon>
        <taxon>Halobacteriales</taxon>
        <taxon>Halobacteriaceae</taxon>
        <taxon>Halobacterium</taxon>
        <taxon>Halobacterium salinarum NRC-34001</taxon>
    </lineage>
</organism>
<reference key="1">
    <citation type="journal article" date="2000" name="Proc. Natl. Acad. Sci. U.S.A.">
        <title>Genome sequence of Halobacterium species NRC-1.</title>
        <authorList>
            <person name="Ng W.V."/>
            <person name="Kennedy S.P."/>
            <person name="Mahairas G.G."/>
            <person name="Berquist B."/>
            <person name="Pan M."/>
            <person name="Shukla H.D."/>
            <person name="Lasky S.R."/>
            <person name="Baliga N.S."/>
            <person name="Thorsson V."/>
            <person name="Sbrogna J."/>
            <person name="Swartzell S."/>
            <person name="Weir D."/>
            <person name="Hall J."/>
            <person name="Dahl T.A."/>
            <person name="Welti R."/>
            <person name="Goo Y.A."/>
            <person name="Leithauser B."/>
            <person name="Keller K."/>
            <person name="Cruz R."/>
            <person name="Danson M.J."/>
            <person name="Hough D.W."/>
            <person name="Maddocks D.G."/>
            <person name="Jablonski P.E."/>
            <person name="Krebs M.P."/>
            <person name="Angevine C.M."/>
            <person name="Dale H."/>
            <person name="Isenbarger T.A."/>
            <person name="Peck R.F."/>
            <person name="Pohlschroder M."/>
            <person name="Spudich J.L."/>
            <person name="Jung K.-H."/>
            <person name="Alam M."/>
            <person name="Freitas T."/>
            <person name="Hou S."/>
            <person name="Daniels C.J."/>
            <person name="Dennis P.P."/>
            <person name="Omer A.D."/>
            <person name="Ebhardt H."/>
            <person name="Lowe T.M."/>
            <person name="Liang P."/>
            <person name="Riley M."/>
            <person name="Hood L."/>
            <person name="DasSarma S."/>
        </authorList>
    </citation>
    <scope>NUCLEOTIDE SEQUENCE [LARGE SCALE GENOMIC DNA]</scope>
    <source>
        <strain>ATCC 700922 / JCM 11081 / NRC-1</strain>
    </source>
</reference>
<comment type="function">
    <text evidence="1">One of two assembly initiator proteins, it binds directly to the 5'-end of the 23S rRNA, where it nucleates assembly of the 50S subunit.</text>
</comment>
<comment type="function">
    <text evidence="1">Located at the polypeptide exit tunnel on the outside of the subunit.</text>
</comment>
<comment type="subunit">
    <text evidence="1">Part of the 50S ribosomal subunit.</text>
</comment>
<comment type="similarity">
    <text evidence="1">Belongs to the universal ribosomal protein uL24 family.</text>
</comment>
<accession>Q9HPC3</accession>
<name>RL24_HALSA</name>
<sequence length="118" mass="13369">MSEQPHKQRTRTKRASLHEKQDQVRATLSEELREEYGQRNVRVNVGDTVEVMRGDDAGEDGEVTDVDLRDAEVFVEGVTVEAADGEETPRPVESSNLRVTDLDLDDDMRVERLEGDNE</sequence>